<proteinExistence type="inferred from homology"/>
<evidence type="ECO:0000255" key="1">
    <source>
        <dbReference type="HAMAP-Rule" id="MF_00004"/>
    </source>
</evidence>
<dbReference type="EC" id="2.4.2.7" evidence="1"/>
<dbReference type="EMBL" id="AM236080">
    <property type="protein sequence ID" value="CAK08971.1"/>
    <property type="molecule type" value="Genomic_DNA"/>
</dbReference>
<dbReference type="RefSeq" id="WP_011652960.1">
    <property type="nucleotide sequence ID" value="NC_008380.1"/>
</dbReference>
<dbReference type="SMR" id="Q1MDK6"/>
<dbReference type="EnsemblBacteria" id="CAK08971">
    <property type="protein sequence ID" value="CAK08971"/>
    <property type="gene ID" value="RL3483"/>
</dbReference>
<dbReference type="KEGG" id="rle:RL3483"/>
<dbReference type="eggNOG" id="COG0503">
    <property type="taxonomic scope" value="Bacteria"/>
</dbReference>
<dbReference type="HOGENOM" id="CLU_063339_3_0_5"/>
<dbReference type="UniPathway" id="UPA00588">
    <property type="reaction ID" value="UER00646"/>
</dbReference>
<dbReference type="Proteomes" id="UP000006575">
    <property type="component" value="Chromosome"/>
</dbReference>
<dbReference type="GO" id="GO:0005737">
    <property type="term" value="C:cytoplasm"/>
    <property type="evidence" value="ECO:0007669"/>
    <property type="project" value="UniProtKB-SubCell"/>
</dbReference>
<dbReference type="GO" id="GO:0002055">
    <property type="term" value="F:adenine binding"/>
    <property type="evidence" value="ECO:0007669"/>
    <property type="project" value="TreeGrafter"/>
</dbReference>
<dbReference type="GO" id="GO:0003999">
    <property type="term" value="F:adenine phosphoribosyltransferase activity"/>
    <property type="evidence" value="ECO:0007669"/>
    <property type="project" value="UniProtKB-UniRule"/>
</dbReference>
<dbReference type="GO" id="GO:0016208">
    <property type="term" value="F:AMP binding"/>
    <property type="evidence" value="ECO:0007669"/>
    <property type="project" value="TreeGrafter"/>
</dbReference>
<dbReference type="GO" id="GO:0006168">
    <property type="term" value="P:adenine salvage"/>
    <property type="evidence" value="ECO:0007669"/>
    <property type="project" value="InterPro"/>
</dbReference>
<dbReference type="GO" id="GO:0044209">
    <property type="term" value="P:AMP salvage"/>
    <property type="evidence" value="ECO:0007669"/>
    <property type="project" value="UniProtKB-UniRule"/>
</dbReference>
<dbReference type="GO" id="GO:0006166">
    <property type="term" value="P:purine ribonucleoside salvage"/>
    <property type="evidence" value="ECO:0007669"/>
    <property type="project" value="UniProtKB-KW"/>
</dbReference>
<dbReference type="CDD" id="cd06223">
    <property type="entry name" value="PRTases_typeI"/>
    <property type="match status" value="1"/>
</dbReference>
<dbReference type="FunFam" id="3.40.50.2020:FF:000021">
    <property type="entry name" value="Adenine phosphoribosyltransferase"/>
    <property type="match status" value="1"/>
</dbReference>
<dbReference type="Gene3D" id="3.40.50.2020">
    <property type="match status" value="1"/>
</dbReference>
<dbReference type="HAMAP" id="MF_00004">
    <property type="entry name" value="Aden_phosphoribosyltr"/>
    <property type="match status" value="1"/>
</dbReference>
<dbReference type="InterPro" id="IPR005764">
    <property type="entry name" value="Ade_phspho_trans"/>
</dbReference>
<dbReference type="InterPro" id="IPR000836">
    <property type="entry name" value="PRibTrfase_dom"/>
</dbReference>
<dbReference type="InterPro" id="IPR029057">
    <property type="entry name" value="PRTase-like"/>
</dbReference>
<dbReference type="InterPro" id="IPR050054">
    <property type="entry name" value="UPRTase/APRTase"/>
</dbReference>
<dbReference type="NCBIfam" id="TIGR01090">
    <property type="entry name" value="apt"/>
    <property type="match status" value="1"/>
</dbReference>
<dbReference type="NCBIfam" id="NF002634">
    <property type="entry name" value="PRK02304.1-3"/>
    <property type="match status" value="1"/>
</dbReference>
<dbReference type="NCBIfam" id="NF002636">
    <property type="entry name" value="PRK02304.1-5"/>
    <property type="match status" value="1"/>
</dbReference>
<dbReference type="PANTHER" id="PTHR32315">
    <property type="entry name" value="ADENINE PHOSPHORIBOSYLTRANSFERASE"/>
    <property type="match status" value="1"/>
</dbReference>
<dbReference type="PANTHER" id="PTHR32315:SF3">
    <property type="entry name" value="ADENINE PHOSPHORIBOSYLTRANSFERASE"/>
    <property type="match status" value="1"/>
</dbReference>
<dbReference type="Pfam" id="PF00156">
    <property type="entry name" value="Pribosyltran"/>
    <property type="match status" value="1"/>
</dbReference>
<dbReference type="SUPFAM" id="SSF53271">
    <property type="entry name" value="PRTase-like"/>
    <property type="match status" value="1"/>
</dbReference>
<dbReference type="PROSITE" id="PS00103">
    <property type="entry name" value="PUR_PYR_PR_TRANSFER"/>
    <property type="match status" value="1"/>
</dbReference>
<accession>Q1MDK6</accession>
<protein>
    <recommendedName>
        <fullName evidence="1">Adenine phosphoribosyltransferase</fullName>
        <shortName evidence="1">APRT</shortName>
        <ecNumber evidence="1">2.4.2.7</ecNumber>
    </recommendedName>
</protein>
<comment type="function">
    <text evidence="1">Catalyzes a salvage reaction resulting in the formation of AMP, that is energically less costly than de novo synthesis.</text>
</comment>
<comment type="catalytic activity">
    <reaction evidence="1">
        <text>AMP + diphosphate = 5-phospho-alpha-D-ribose 1-diphosphate + adenine</text>
        <dbReference type="Rhea" id="RHEA:16609"/>
        <dbReference type="ChEBI" id="CHEBI:16708"/>
        <dbReference type="ChEBI" id="CHEBI:33019"/>
        <dbReference type="ChEBI" id="CHEBI:58017"/>
        <dbReference type="ChEBI" id="CHEBI:456215"/>
        <dbReference type="EC" id="2.4.2.7"/>
    </reaction>
</comment>
<comment type="pathway">
    <text evidence="1">Purine metabolism; AMP biosynthesis via salvage pathway; AMP from adenine: step 1/1.</text>
</comment>
<comment type="subunit">
    <text evidence="1">Homodimer.</text>
</comment>
<comment type="subcellular location">
    <subcellularLocation>
        <location evidence="1">Cytoplasm</location>
    </subcellularLocation>
</comment>
<comment type="similarity">
    <text evidence="1">Belongs to the purine/pyrimidine phosphoribosyltransferase family.</text>
</comment>
<organism>
    <name type="scientific">Rhizobium johnstonii (strain DSM 114642 / LMG 32736 / 3841)</name>
    <name type="common">Rhizobium leguminosarum bv. viciae</name>
    <dbReference type="NCBI Taxonomy" id="216596"/>
    <lineage>
        <taxon>Bacteria</taxon>
        <taxon>Pseudomonadati</taxon>
        <taxon>Pseudomonadota</taxon>
        <taxon>Alphaproteobacteria</taxon>
        <taxon>Hyphomicrobiales</taxon>
        <taxon>Rhizobiaceae</taxon>
        <taxon>Rhizobium/Agrobacterium group</taxon>
        <taxon>Rhizobium</taxon>
        <taxon>Rhizobium johnstonii</taxon>
    </lineage>
</organism>
<keyword id="KW-0963">Cytoplasm</keyword>
<keyword id="KW-0328">Glycosyltransferase</keyword>
<keyword id="KW-0660">Purine salvage</keyword>
<keyword id="KW-0808">Transferase</keyword>
<name>APT_RHIJ3</name>
<reference key="1">
    <citation type="journal article" date="2006" name="Genome Biol.">
        <title>The genome of Rhizobium leguminosarum has recognizable core and accessory components.</title>
        <authorList>
            <person name="Young J.P.W."/>
            <person name="Crossman L.C."/>
            <person name="Johnston A.W.B."/>
            <person name="Thomson N.R."/>
            <person name="Ghazoui Z.F."/>
            <person name="Hull K.H."/>
            <person name="Wexler M."/>
            <person name="Curson A.R.J."/>
            <person name="Todd J.D."/>
            <person name="Poole P.S."/>
            <person name="Mauchline T.H."/>
            <person name="East A.K."/>
            <person name="Quail M.A."/>
            <person name="Churcher C."/>
            <person name="Arrowsmith C."/>
            <person name="Cherevach I."/>
            <person name="Chillingworth T."/>
            <person name="Clarke K."/>
            <person name="Cronin A."/>
            <person name="Davis P."/>
            <person name="Fraser A."/>
            <person name="Hance Z."/>
            <person name="Hauser H."/>
            <person name="Jagels K."/>
            <person name="Moule S."/>
            <person name="Mungall K."/>
            <person name="Norbertczak H."/>
            <person name="Rabbinowitsch E."/>
            <person name="Sanders M."/>
            <person name="Simmonds M."/>
            <person name="Whitehead S."/>
            <person name="Parkhill J."/>
        </authorList>
    </citation>
    <scope>NUCLEOTIDE SEQUENCE [LARGE SCALE GENOMIC DNA]</scope>
    <source>
        <strain>DSM 114642 / LMG 32736 / 3841</strain>
    </source>
</reference>
<gene>
    <name evidence="1" type="primary">apt</name>
    <name type="ordered locus">RL3483</name>
</gene>
<feature type="chain" id="PRO_0000321391" description="Adenine phosphoribosyltransferase">
    <location>
        <begin position="1"/>
        <end position="180"/>
    </location>
</feature>
<sequence length="180" mass="19457">MNNTISELAASIRSIPDYPKPGIIFRDITTLLGNPRAFRRAVDELVQPYAGTKIDKIAGMEARGFILGGAVAHQLSSGFVPIRKKGKLPHETVRIAYSLEYGVDEMEMHRDAVQPGEKVILVDDLIATGGTAVGATRLLRQIGAEVVGACFVIDLPDLGGRRKLEELGVVVHTLVEFSGH</sequence>